<gene>
    <name type="primary">mt:CoII</name>
    <name type="synonym">CoII</name>
</gene>
<feature type="chain" id="PRO_0000183573" description="Cytochrome c oxidase subunit 2">
    <location>
        <begin position="1"/>
        <end position="229"/>
    </location>
</feature>
<feature type="topological domain" description="Mitochondrial intermembrane" evidence="2">
    <location>
        <begin position="1"/>
        <end position="26"/>
    </location>
</feature>
<feature type="transmembrane region" description="Helical" evidence="2">
    <location>
        <begin position="27"/>
        <end position="48"/>
    </location>
</feature>
<feature type="topological domain" description="Mitochondrial matrix" evidence="2">
    <location>
        <begin position="49"/>
        <end position="62"/>
    </location>
</feature>
<feature type="transmembrane region" description="Helical" evidence="2">
    <location>
        <begin position="63"/>
        <end position="82"/>
    </location>
</feature>
<feature type="topological domain" description="Mitochondrial intermembrane" evidence="2">
    <location>
        <begin position="83"/>
        <end position="229"/>
    </location>
</feature>
<feature type="binding site" evidence="1">
    <location>
        <position position="161"/>
    </location>
    <ligand>
        <name>Cu cation</name>
        <dbReference type="ChEBI" id="CHEBI:23378"/>
        <label>A1</label>
    </ligand>
</feature>
<feature type="binding site" evidence="1">
    <location>
        <position position="196"/>
    </location>
    <ligand>
        <name>Cu cation</name>
        <dbReference type="ChEBI" id="CHEBI:23378"/>
        <label>A1</label>
    </ligand>
</feature>
<feature type="binding site" evidence="1">
    <location>
        <position position="196"/>
    </location>
    <ligand>
        <name>Cu cation</name>
        <dbReference type="ChEBI" id="CHEBI:23378"/>
        <label>A2</label>
    </ligand>
</feature>
<feature type="binding site" evidence="1">
    <location>
        <position position="198"/>
    </location>
    <ligand>
        <name>Cu cation</name>
        <dbReference type="ChEBI" id="CHEBI:23378"/>
        <label>A2</label>
    </ligand>
</feature>
<feature type="binding site" evidence="1">
    <location>
        <position position="198"/>
    </location>
    <ligand>
        <name>Mg(2+)</name>
        <dbReference type="ChEBI" id="CHEBI:18420"/>
        <note>ligand shared with subunit 1</note>
    </ligand>
</feature>
<feature type="binding site" evidence="1">
    <location>
        <position position="200"/>
    </location>
    <ligand>
        <name>Cu cation</name>
        <dbReference type="ChEBI" id="CHEBI:23378"/>
        <label>A1</label>
    </ligand>
</feature>
<feature type="binding site" evidence="1">
    <location>
        <position position="200"/>
    </location>
    <ligand>
        <name>Cu cation</name>
        <dbReference type="ChEBI" id="CHEBI:23378"/>
        <label>A2</label>
    </ligand>
</feature>
<feature type="binding site" evidence="1">
    <location>
        <position position="204"/>
    </location>
    <ligand>
        <name>Cu cation</name>
        <dbReference type="ChEBI" id="CHEBI:23378"/>
        <label>A2</label>
    </ligand>
</feature>
<feature type="binding site" evidence="1">
    <location>
        <position position="207"/>
    </location>
    <ligand>
        <name>Cu cation</name>
        <dbReference type="ChEBI" id="CHEBI:23378"/>
        <label>A1</label>
    </ligand>
</feature>
<name>COX2_DROAL</name>
<sequence length="229" mass="26248">MSTWANLGLQDSASPLMEQLIFFHDHALLILVMITVLVGYLMFMLFFNSYVNRFLLHGQLIEMIWTILPAIILLFIAMPSLRLLYLLDEINEPSITLKSIGHQWYWSYEYSDFNNVEFDSYMIPTNELANDGFRLLDVDNRIVLPMNSQIRILVTAADVIHSWTVPALGVKVDGTPGRLNQTNFFINRPGLFYGQCSEICGANHSFMPIVIESVPVNYFIKWISNSVNS</sequence>
<dbReference type="EC" id="7.1.1.9"/>
<dbReference type="EMBL" id="M95144">
    <property type="protein sequence ID" value="AAA02774.2"/>
    <property type="molecule type" value="Genomic_DNA"/>
</dbReference>
<dbReference type="SMR" id="P84201"/>
<dbReference type="GO" id="GO:0005743">
    <property type="term" value="C:mitochondrial inner membrane"/>
    <property type="evidence" value="ECO:0007669"/>
    <property type="project" value="UniProtKB-SubCell"/>
</dbReference>
<dbReference type="GO" id="GO:0005507">
    <property type="term" value="F:copper ion binding"/>
    <property type="evidence" value="ECO:0007669"/>
    <property type="project" value="InterPro"/>
</dbReference>
<dbReference type="GO" id="GO:0004129">
    <property type="term" value="F:cytochrome-c oxidase activity"/>
    <property type="evidence" value="ECO:0007669"/>
    <property type="project" value="UniProtKB-EC"/>
</dbReference>
<dbReference type="GO" id="GO:0042773">
    <property type="term" value="P:ATP synthesis coupled electron transport"/>
    <property type="evidence" value="ECO:0007669"/>
    <property type="project" value="TreeGrafter"/>
</dbReference>
<dbReference type="CDD" id="cd13912">
    <property type="entry name" value="CcO_II_C"/>
    <property type="match status" value="1"/>
</dbReference>
<dbReference type="FunFam" id="1.10.287.90:FF:000006">
    <property type="entry name" value="Cytochrome c oxidase subunit 2"/>
    <property type="match status" value="1"/>
</dbReference>
<dbReference type="FunFam" id="2.60.40.420:FF:000001">
    <property type="entry name" value="Cytochrome c oxidase subunit 2"/>
    <property type="match status" value="1"/>
</dbReference>
<dbReference type="Gene3D" id="1.10.287.90">
    <property type="match status" value="1"/>
</dbReference>
<dbReference type="Gene3D" id="2.60.40.420">
    <property type="entry name" value="Cupredoxins - blue copper proteins"/>
    <property type="match status" value="1"/>
</dbReference>
<dbReference type="InterPro" id="IPR045187">
    <property type="entry name" value="CcO_II"/>
</dbReference>
<dbReference type="InterPro" id="IPR002429">
    <property type="entry name" value="CcO_II-like_C"/>
</dbReference>
<dbReference type="InterPro" id="IPR034210">
    <property type="entry name" value="CcO_II_C"/>
</dbReference>
<dbReference type="InterPro" id="IPR001505">
    <property type="entry name" value="Copper_CuA"/>
</dbReference>
<dbReference type="InterPro" id="IPR008972">
    <property type="entry name" value="Cupredoxin"/>
</dbReference>
<dbReference type="InterPro" id="IPR014222">
    <property type="entry name" value="Cyt_c_oxidase_su2"/>
</dbReference>
<dbReference type="InterPro" id="IPR011759">
    <property type="entry name" value="Cyt_c_oxidase_su2_TM_dom"/>
</dbReference>
<dbReference type="InterPro" id="IPR036257">
    <property type="entry name" value="Cyt_c_oxidase_su2_TM_sf"/>
</dbReference>
<dbReference type="NCBIfam" id="TIGR02866">
    <property type="entry name" value="CoxB"/>
    <property type="match status" value="1"/>
</dbReference>
<dbReference type="PANTHER" id="PTHR22888:SF9">
    <property type="entry name" value="CYTOCHROME C OXIDASE SUBUNIT 2"/>
    <property type="match status" value="1"/>
</dbReference>
<dbReference type="PANTHER" id="PTHR22888">
    <property type="entry name" value="CYTOCHROME C OXIDASE, SUBUNIT II"/>
    <property type="match status" value="1"/>
</dbReference>
<dbReference type="Pfam" id="PF00116">
    <property type="entry name" value="COX2"/>
    <property type="match status" value="1"/>
</dbReference>
<dbReference type="Pfam" id="PF02790">
    <property type="entry name" value="COX2_TM"/>
    <property type="match status" value="1"/>
</dbReference>
<dbReference type="PRINTS" id="PR01166">
    <property type="entry name" value="CYCOXIDASEII"/>
</dbReference>
<dbReference type="SUPFAM" id="SSF49503">
    <property type="entry name" value="Cupredoxins"/>
    <property type="match status" value="1"/>
</dbReference>
<dbReference type="SUPFAM" id="SSF81464">
    <property type="entry name" value="Cytochrome c oxidase subunit II-like, transmembrane region"/>
    <property type="match status" value="1"/>
</dbReference>
<dbReference type="PROSITE" id="PS00078">
    <property type="entry name" value="COX2"/>
    <property type="match status" value="1"/>
</dbReference>
<dbReference type="PROSITE" id="PS50857">
    <property type="entry name" value="COX2_CUA"/>
    <property type="match status" value="1"/>
</dbReference>
<dbReference type="PROSITE" id="PS50999">
    <property type="entry name" value="COX2_TM"/>
    <property type="match status" value="1"/>
</dbReference>
<reference key="1">
    <citation type="journal article" date="1993" name="Mol. Biol. Evol.">
        <title>Relationships in the Drosophila obscura species group, inferred from mitochondrial cytochrome oxidase II sequences.</title>
        <authorList>
            <person name="Beckenbach A.T."/>
            <person name="Wei Y.W."/>
            <person name="Liu H."/>
        </authorList>
    </citation>
    <scope>NUCLEOTIDE SEQUENCE [GENOMIC DNA]</scope>
</reference>
<evidence type="ECO:0000250" key="1">
    <source>
        <dbReference type="UniProtKB" id="P00410"/>
    </source>
</evidence>
<evidence type="ECO:0000255" key="2"/>
<evidence type="ECO:0000305" key="3"/>
<organism>
    <name type="scientific">Drosophila algonquin</name>
    <name type="common">Fruit fly</name>
    <dbReference type="NCBI Taxonomy" id="7247"/>
    <lineage>
        <taxon>Eukaryota</taxon>
        <taxon>Metazoa</taxon>
        <taxon>Ecdysozoa</taxon>
        <taxon>Arthropoda</taxon>
        <taxon>Hexapoda</taxon>
        <taxon>Insecta</taxon>
        <taxon>Pterygota</taxon>
        <taxon>Neoptera</taxon>
        <taxon>Endopterygota</taxon>
        <taxon>Diptera</taxon>
        <taxon>Brachycera</taxon>
        <taxon>Muscomorpha</taxon>
        <taxon>Ephydroidea</taxon>
        <taxon>Drosophilidae</taxon>
        <taxon>Drosophila</taxon>
        <taxon>Sophophora</taxon>
    </lineage>
</organism>
<geneLocation type="mitochondrion"/>
<accession>P84201</accession>
<accession>P29854</accession>
<accession>P29855</accession>
<accession>P29857</accession>
<accession>P29858</accession>
<keyword id="KW-0186">Copper</keyword>
<keyword id="KW-0249">Electron transport</keyword>
<keyword id="KW-0460">Magnesium</keyword>
<keyword id="KW-0472">Membrane</keyword>
<keyword id="KW-0479">Metal-binding</keyword>
<keyword id="KW-0496">Mitochondrion</keyword>
<keyword id="KW-0999">Mitochondrion inner membrane</keyword>
<keyword id="KW-0679">Respiratory chain</keyword>
<keyword id="KW-1278">Translocase</keyword>
<keyword id="KW-0812">Transmembrane</keyword>
<keyword id="KW-1133">Transmembrane helix</keyword>
<keyword id="KW-0813">Transport</keyword>
<protein>
    <recommendedName>
        <fullName>Cytochrome c oxidase subunit 2</fullName>
        <ecNumber>7.1.1.9</ecNumber>
    </recommendedName>
    <alternativeName>
        <fullName>Cytochrome c oxidase polypeptide II</fullName>
    </alternativeName>
</protein>
<proteinExistence type="inferred from homology"/>
<comment type="function">
    <text evidence="1">Component of the cytochrome c oxidase, the last enzyme in the mitochondrial electron transport chain which drives oxidative phosphorylation. The respiratory chain contains 3 multisubunit complexes succinate dehydrogenase (complex II, CII), ubiquinol-cytochrome c oxidoreductase (cytochrome b-c1 complex, complex III, CIII) and cytochrome c oxidase (complex IV, CIV), that cooperate to transfer electrons derived from NADH and succinate to molecular oxygen, creating an electrochemical gradient over the inner membrane that drives transmembrane transport and the ATP synthase. Cytochrome c oxidase is the component of the respiratory chain that catalyzes the reduction of oxygen to water. Electrons originating from reduced cytochrome c in the intermembrane space (IMS) are transferred via the dinuclear copper A center (CU(A)) of subunit 2 and heme A of subunit 1 to the active site in subunit 1, a binuclear center (BNC) formed by heme A3 and copper B (CU(B)). The BNC reduces molecular oxygen to 2 water molecules using 4 electrons from cytochrome c in the IMS and 4 protons from the mitochondrial matrix.</text>
</comment>
<comment type="catalytic activity">
    <reaction evidence="1">
        <text>4 Fe(II)-[cytochrome c] + O2 + 8 H(+)(in) = 4 Fe(III)-[cytochrome c] + 2 H2O + 4 H(+)(out)</text>
        <dbReference type="Rhea" id="RHEA:11436"/>
        <dbReference type="Rhea" id="RHEA-COMP:10350"/>
        <dbReference type="Rhea" id="RHEA-COMP:14399"/>
        <dbReference type="ChEBI" id="CHEBI:15377"/>
        <dbReference type="ChEBI" id="CHEBI:15378"/>
        <dbReference type="ChEBI" id="CHEBI:15379"/>
        <dbReference type="ChEBI" id="CHEBI:29033"/>
        <dbReference type="ChEBI" id="CHEBI:29034"/>
        <dbReference type="EC" id="7.1.1.9"/>
    </reaction>
    <physiologicalReaction direction="left-to-right" evidence="1">
        <dbReference type="Rhea" id="RHEA:11437"/>
    </physiologicalReaction>
</comment>
<comment type="cofactor">
    <cofactor evidence="1">
        <name>Cu cation</name>
        <dbReference type="ChEBI" id="CHEBI:23378"/>
    </cofactor>
    <text evidence="1">Binds a dinuclear copper A center per subunit.</text>
</comment>
<comment type="subunit">
    <text evidence="1">Component of the cytochrome c oxidase (complex IV, CIV), a multisubunit enzyme composed of a catalytic core of 3 subunits and several supernumerary subunits. The complex exists as a monomer or a dimer and forms supercomplexes (SCs) in the inner mitochondrial membrane with ubiquinol-cytochrome c oxidoreductase (cytochrome b-c1 complex, complex III, CIII).</text>
</comment>
<comment type="subcellular location">
    <subcellularLocation>
        <location evidence="1">Mitochondrion inner membrane</location>
        <topology evidence="1">Multi-pass membrane protein</topology>
    </subcellularLocation>
</comment>
<comment type="similarity">
    <text evidence="3">Belongs to the cytochrome c oxidase subunit 2 family.</text>
</comment>